<name>COBS_BRUA1</name>
<keyword id="KW-0997">Cell inner membrane</keyword>
<keyword id="KW-1003">Cell membrane</keyword>
<keyword id="KW-0169">Cobalamin biosynthesis</keyword>
<keyword id="KW-0460">Magnesium</keyword>
<keyword id="KW-0472">Membrane</keyword>
<keyword id="KW-0808">Transferase</keyword>
<keyword id="KW-0812">Transmembrane</keyword>
<keyword id="KW-1133">Transmembrane helix</keyword>
<comment type="function">
    <text evidence="1">Joins adenosylcobinamide-GDP and alpha-ribazole to generate adenosylcobalamin (Ado-cobalamin). Also synthesizes adenosylcobalamin 5'-phosphate from adenosylcobinamide-GDP and alpha-ribazole 5'-phosphate.</text>
</comment>
<comment type="catalytic activity">
    <reaction evidence="1">
        <text>alpha-ribazole + adenosylcob(III)inamide-GDP = adenosylcob(III)alamin + GMP + H(+)</text>
        <dbReference type="Rhea" id="RHEA:16049"/>
        <dbReference type="ChEBI" id="CHEBI:10329"/>
        <dbReference type="ChEBI" id="CHEBI:15378"/>
        <dbReference type="ChEBI" id="CHEBI:18408"/>
        <dbReference type="ChEBI" id="CHEBI:58115"/>
        <dbReference type="ChEBI" id="CHEBI:60487"/>
        <dbReference type="EC" id="2.7.8.26"/>
    </reaction>
</comment>
<comment type="catalytic activity">
    <reaction evidence="1">
        <text>alpha-ribazole 5'-phosphate + adenosylcob(III)inamide-GDP = adenosylcob(III)alamin 5'-phosphate + GMP + H(+)</text>
        <dbReference type="Rhea" id="RHEA:23560"/>
        <dbReference type="ChEBI" id="CHEBI:15378"/>
        <dbReference type="ChEBI" id="CHEBI:57918"/>
        <dbReference type="ChEBI" id="CHEBI:58115"/>
        <dbReference type="ChEBI" id="CHEBI:60487"/>
        <dbReference type="ChEBI" id="CHEBI:60493"/>
        <dbReference type="EC" id="2.7.8.26"/>
    </reaction>
</comment>
<comment type="cofactor">
    <cofactor evidence="1">
        <name>Mg(2+)</name>
        <dbReference type="ChEBI" id="CHEBI:18420"/>
    </cofactor>
</comment>
<comment type="pathway">
    <text evidence="1">Cofactor biosynthesis; adenosylcobalamin biosynthesis; adenosylcobalamin from cob(II)yrinate a,c-diamide: step 7/7.</text>
</comment>
<comment type="subcellular location">
    <subcellularLocation>
        <location evidence="1">Cell inner membrane</location>
        <topology evidence="1">Multi-pass membrane protein</topology>
    </subcellularLocation>
</comment>
<comment type="similarity">
    <text evidence="1">Belongs to the CobS family.</text>
</comment>
<dbReference type="EC" id="2.7.8.26" evidence="1"/>
<dbReference type="EMBL" id="CP000887">
    <property type="protein sequence ID" value="ACD72347.1"/>
    <property type="molecule type" value="Genomic_DNA"/>
</dbReference>
<dbReference type="RefSeq" id="WP_002963996.1">
    <property type="nucleotide sequence ID" value="NC_010742.1"/>
</dbReference>
<dbReference type="KEGG" id="bmc:BAbS19_I08260"/>
<dbReference type="HOGENOM" id="CLU_057426_1_0_5"/>
<dbReference type="UniPathway" id="UPA00148">
    <property type="reaction ID" value="UER00238"/>
</dbReference>
<dbReference type="Proteomes" id="UP000002565">
    <property type="component" value="Chromosome 1"/>
</dbReference>
<dbReference type="GO" id="GO:0005886">
    <property type="term" value="C:plasma membrane"/>
    <property type="evidence" value="ECO:0007669"/>
    <property type="project" value="UniProtKB-SubCell"/>
</dbReference>
<dbReference type="GO" id="GO:0051073">
    <property type="term" value="F:adenosylcobinamide-GDP ribazoletransferase activity"/>
    <property type="evidence" value="ECO:0007669"/>
    <property type="project" value="UniProtKB-UniRule"/>
</dbReference>
<dbReference type="GO" id="GO:0008818">
    <property type="term" value="F:cobalamin 5'-phosphate synthase activity"/>
    <property type="evidence" value="ECO:0007669"/>
    <property type="project" value="UniProtKB-UniRule"/>
</dbReference>
<dbReference type="GO" id="GO:0009236">
    <property type="term" value="P:cobalamin biosynthetic process"/>
    <property type="evidence" value="ECO:0007669"/>
    <property type="project" value="UniProtKB-UniRule"/>
</dbReference>
<dbReference type="HAMAP" id="MF_00719">
    <property type="entry name" value="CobS"/>
    <property type="match status" value="1"/>
</dbReference>
<dbReference type="InterPro" id="IPR003805">
    <property type="entry name" value="CobS"/>
</dbReference>
<dbReference type="NCBIfam" id="TIGR00317">
    <property type="entry name" value="cobS"/>
    <property type="match status" value="1"/>
</dbReference>
<dbReference type="NCBIfam" id="NF001276">
    <property type="entry name" value="PRK00235.1-2"/>
    <property type="match status" value="1"/>
</dbReference>
<dbReference type="PANTHER" id="PTHR34148">
    <property type="entry name" value="ADENOSYLCOBINAMIDE-GDP RIBAZOLETRANSFERASE"/>
    <property type="match status" value="1"/>
</dbReference>
<dbReference type="PANTHER" id="PTHR34148:SF1">
    <property type="entry name" value="ADENOSYLCOBINAMIDE-GDP RIBAZOLETRANSFERASE"/>
    <property type="match status" value="1"/>
</dbReference>
<dbReference type="Pfam" id="PF02654">
    <property type="entry name" value="CobS"/>
    <property type="match status" value="1"/>
</dbReference>
<gene>
    <name evidence="1" type="primary">cobS</name>
    <name type="ordered locus">BAbS19_I08260</name>
</gene>
<accession>B2S5A0</accession>
<proteinExistence type="inferred from homology"/>
<sequence>MQRNGLIGDTIRSLGFLSRLPLPQGWFDNTDDSLPRNARAFPLAGGILGLLAGVALLIANAISLPPLAAALIAIGALAAMTGALHEDGLGDTADGFFGASTPDRRLDIMKDSRIGTFAALTLVIWTGVKASLLMAIIARAGAGYALLALIGTEAASRAGMLAFWHALPSARPGGLADSMGQPQWETVVCGCGLGLALLAIGFLPSGGMVALINALVLMTVVLFGFARLCMAKIGGQTGDTLGAAQQIGSLAALIGLVMAL</sequence>
<protein>
    <recommendedName>
        <fullName evidence="1">Adenosylcobinamide-GDP ribazoletransferase</fullName>
        <ecNumber evidence="1">2.7.8.26</ecNumber>
    </recommendedName>
    <alternativeName>
        <fullName evidence="1">Cobalamin synthase</fullName>
    </alternativeName>
    <alternativeName>
        <fullName evidence="1">Cobalamin-5'-phosphate synthase</fullName>
    </alternativeName>
</protein>
<feature type="chain" id="PRO_1000132559" description="Adenosylcobinamide-GDP ribazoletransferase">
    <location>
        <begin position="1"/>
        <end position="260"/>
    </location>
</feature>
<feature type="transmembrane region" description="Helical" evidence="1">
    <location>
        <begin position="42"/>
        <end position="62"/>
    </location>
</feature>
<feature type="transmembrane region" description="Helical" evidence="1">
    <location>
        <begin position="64"/>
        <end position="84"/>
    </location>
</feature>
<feature type="transmembrane region" description="Helical" evidence="1">
    <location>
        <begin position="117"/>
        <end position="137"/>
    </location>
</feature>
<feature type="transmembrane region" description="Helical" evidence="1">
    <location>
        <begin position="144"/>
        <end position="164"/>
    </location>
</feature>
<feature type="transmembrane region" description="Helical" evidence="1">
    <location>
        <begin position="192"/>
        <end position="212"/>
    </location>
</feature>
<feature type="transmembrane region" description="Helical" evidence="1">
    <location>
        <begin position="214"/>
        <end position="234"/>
    </location>
</feature>
<feature type="transmembrane region" description="Helical" evidence="1">
    <location>
        <begin position="240"/>
        <end position="260"/>
    </location>
</feature>
<organism>
    <name type="scientific">Brucella abortus (strain S19)</name>
    <dbReference type="NCBI Taxonomy" id="430066"/>
    <lineage>
        <taxon>Bacteria</taxon>
        <taxon>Pseudomonadati</taxon>
        <taxon>Pseudomonadota</taxon>
        <taxon>Alphaproteobacteria</taxon>
        <taxon>Hyphomicrobiales</taxon>
        <taxon>Brucellaceae</taxon>
        <taxon>Brucella/Ochrobactrum group</taxon>
        <taxon>Brucella</taxon>
    </lineage>
</organism>
<evidence type="ECO:0000255" key="1">
    <source>
        <dbReference type="HAMAP-Rule" id="MF_00719"/>
    </source>
</evidence>
<reference key="1">
    <citation type="journal article" date="2008" name="PLoS ONE">
        <title>Genome sequence of Brucella abortus vaccine strain S19 compared to virulent strains yields candidate virulence genes.</title>
        <authorList>
            <person name="Crasta O.R."/>
            <person name="Folkerts O."/>
            <person name="Fei Z."/>
            <person name="Mane S.P."/>
            <person name="Evans C."/>
            <person name="Martino-Catt S."/>
            <person name="Bricker B."/>
            <person name="Yu G."/>
            <person name="Du L."/>
            <person name="Sobral B.W."/>
        </authorList>
    </citation>
    <scope>NUCLEOTIDE SEQUENCE [LARGE SCALE GENOMIC DNA]</scope>
    <source>
        <strain>S19</strain>
    </source>
</reference>